<accession>P29924</accession>
<protein>
    <recommendedName>
        <fullName>NADH-quinone oxidoreductase chain 12</fullName>
        <ecNumber>7.1.1.-</ecNumber>
    </recommendedName>
    <alternativeName>
        <fullName>NADH dehydrogenase I, chain 12</fullName>
    </alternativeName>
    <alternativeName>
        <fullName>NDH-1, chain 12</fullName>
    </alternativeName>
</protein>
<dbReference type="EC" id="7.1.1.-"/>
<dbReference type="EMBL" id="L02354">
    <property type="protein sequence ID" value="AAA25598.1"/>
    <property type="molecule type" value="Genomic_DNA"/>
</dbReference>
<dbReference type="PIR" id="H45456">
    <property type="entry name" value="H45456"/>
</dbReference>
<dbReference type="SMR" id="P29924"/>
<dbReference type="TCDB" id="3.D.1.2.1">
    <property type="family name" value="the h+ or na+-translocating nadh dehydrogenase (ndh) family"/>
</dbReference>
<dbReference type="GO" id="GO:0005886">
    <property type="term" value="C:plasma membrane"/>
    <property type="evidence" value="ECO:0007669"/>
    <property type="project" value="UniProtKB-SubCell"/>
</dbReference>
<dbReference type="GO" id="GO:0008137">
    <property type="term" value="F:NADH dehydrogenase (ubiquinone) activity"/>
    <property type="evidence" value="ECO:0007669"/>
    <property type="project" value="InterPro"/>
</dbReference>
<dbReference type="GO" id="GO:0048038">
    <property type="term" value="F:quinone binding"/>
    <property type="evidence" value="ECO:0007669"/>
    <property type="project" value="UniProtKB-KW"/>
</dbReference>
<dbReference type="GO" id="GO:0042773">
    <property type="term" value="P:ATP synthesis coupled electron transport"/>
    <property type="evidence" value="ECO:0007669"/>
    <property type="project" value="InterPro"/>
</dbReference>
<dbReference type="GO" id="GO:0015990">
    <property type="term" value="P:electron transport coupled proton transport"/>
    <property type="evidence" value="ECO:0007669"/>
    <property type="project" value="TreeGrafter"/>
</dbReference>
<dbReference type="Gene3D" id="1.20.5.2700">
    <property type="match status" value="1"/>
</dbReference>
<dbReference type="InterPro" id="IPR018393">
    <property type="entry name" value="NADHpl_OxRdtase_5_subgr"/>
</dbReference>
<dbReference type="InterPro" id="IPR001750">
    <property type="entry name" value="ND/Mrp_TM"/>
</dbReference>
<dbReference type="InterPro" id="IPR003945">
    <property type="entry name" value="NU5C-like"/>
</dbReference>
<dbReference type="InterPro" id="IPR001516">
    <property type="entry name" value="Proton_antipo_N"/>
</dbReference>
<dbReference type="NCBIfam" id="TIGR01974">
    <property type="entry name" value="NDH_I_L"/>
    <property type="match status" value="1"/>
</dbReference>
<dbReference type="NCBIfam" id="NF005141">
    <property type="entry name" value="PRK06590.1"/>
    <property type="match status" value="1"/>
</dbReference>
<dbReference type="PANTHER" id="PTHR42829">
    <property type="entry name" value="NADH-UBIQUINONE OXIDOREDUCTASE CHAIN 5"/>
    <property type="match status" value="1"/>
</dbReference>
<dbReference type="PANTHER" id="PTHR42829:SF2">
    <property type="entry name" value="NADH-UBIQUINONE OXIDOREDUCTASE CHAIN 5"/>
    <property type="match status" value="1"/>
</dbReference>
<dbReference type="Pfam" id="PF00361">
    <property type="entry name" value="Proton_antipo_M"/>
    <property type="match status" value="1"/>
</dbReference>
<dbReference type="Pfam" id="PF00662">
    <property type="entry name" value="Proton_antipo_N"/>
    <property type="match status" value="1"/>
</dbReference>
<dbReference type="PRINTS" id="PR01434">
    <property type="entry name" value="NADHDHGNASE5"/>
</dbReference>
<dbReference type="PRINTS" id="PR01435">
    <property type="entry name" value="NPOXDRDTASE5"/>
</dbReference>
<proteinExistence type="inferred from homology"/>
<sequence length="703" mass="77706">MEKFVLFAPLIASLIAGLGWRAIGEKAAQYLTTGVLFLSCLISWYLFLSFDGVPRHIPVLDWVVTGDFHAEWAIRLDRLTAIMLIVVTTVSALVHMYSLGYMAHDDNWTHDEHYKARFFAYLSFFTFAMLMLVTADNLLQMFFGWEGVGVASYLLIGFYYKKASANAAAMKAFIVNRVGDFGFLLGIFGIYWLTGSVQFDEIFRQVPQLAQTEIDFLWRDWNAANLLGFLLFVGAMGKSAQLLLHTWLPDAMEGPTPVSALIHAATMVTAGVFLVCRMSPLYEFAPDAKNFIVIIGATTAFFAATVGLVQNDIKRVIAYSTCSQLGYMFVAAGVGVYSAAMFHLLTHAFFKAMLFLGAGSVIHAMHHEQDMRNYGGLRKKIPLTFWAMMIGTFAITGVGIPLTHLGFAGFLSKDAIIESAYAGSGYAFWLLVIAACFTSFYSWRLIFLTFYGKPRGDHHAHDHAHESPPVMTIPLGVLAIGAVFAGMVWYGPFFGDHHKVTEYFHIAGAHHEAAEGEEAEHATAEAPVEHAVADTATAEGEAAAEAEHAEIAAPVGGAIYMHPDNHIMDEAHHAPAWVKVSPFVAMVLGLITAWTFYIANPSLPRRLAAHEPALYRFLLNKWYFDEIYEFIFVRPAKWLGRVLWKGGDGAVIDGTINGVAMGLIPRLTRAAVRVQSGYLFHYAFAMVLGIVGLLIWVMMRGAH</sequence>
<reference key="1">
    <citation type="journal article" date="1993" name="Biochemistry">
        <title>DNA sequencing of the seven remaining structural genes of the gene cluster encoding the energy-transducing NADH-quinone oxidoreductase of Paracoccus denitrificans.</title>
        <authorList>
            <person name="Xu X."/>
            <person name="Matsuno-Yagi A."/>
            <person name="Yagi T."/>
        </authorList>
    </citation>
    <scope>NUCLEOTIDE SEQUENCE [GENOMIC DNA]</scope>
    <source>
        <strain>ATCC 13543 / NRRL B-3784 / NRC 449</strain>
    </source>
</reference>
<keyword id="KW-0997">Cell inner membrane</keyword>
<keyword id="KW-1003">Cell membrane</keyword>
<keyword id="KW-0472">Membrane</keyword>
<keyword id="KW-0520">NAD</keyword>
<keyword id="KW-0874">Quinone</keyword>
<keyword id="KW-1278">Translocase</keyword>
<keyword id="KW-0812">Transmembrane</keyword>
<keyword id="KW-1133">Transmembrane helix</keyword>
<keyword id="KW-0830">Ubiquinone</keyword>
<evidence type="ECO:0000255" key="1"/>
<evidence type="ECO:0000303" key="2">
    <source>
    </source>
</evidence>
<evidence type="ECO:0000305" key="3"/>
<name>NQO12_PARDE</name>
<comment type="function">
    <text>NDH-1 shuttles electrons from NADH, via FMN and iron-sulfur (Fe-S) centers, to quinones in the respiratory chain. The immediate electron acceptor for the enzyme in this species is believed to be ubiquinone. Couples the redox reaction to proton translocation (for every two electrons transferred, four hydrogen ions are translocated across the cytoplasmic membrane), and thus conserves the redox energy in a proton gradient.</text>
</comment>
<comment type="catalytic activity">
    <reaction>
        <text>a quinone + NADH + 5 H(+)(in) = a quinol + NAD(+) + 4 H(+)(out)</text>
        <dbReference type="Rhea" id="RHEA:57888"/>
        <dbReference type="ChEBI" id="CHEBI:15378"/>
        <dbReference type="ChEBI" id="CHEBI:24646"/>
        <dbReference type="ChEBI" id="CHEBI:57540"/>
        <dbReference type="ChEBI" id="CHEBI:57945"/>
        <dbReference type="ChEBI" id="CHEBI:132124"/>
    </reaction>
</comment>
<comment type="subunit">
    <text>NDH-1 is composed of at least 14 different subunits, Nqo1 to Nqo14. The complex has a L-shaped structure, with the hydrophobic arm (subunits Nqo7, Nqo8, Nqo10 to Nqo14) embedded in the inner membrane and the hydrophilic peripheral arm (subunits Nqo1 to Nqo6, Nqo9) protruding into the bacterial cytoplasm. The hydrophilic domain contains all the redox centers.</text>
</comment>
<comment type="subcellular location">
    <subcellularLocation>
        <location>Cell inner membrane</location>
        <topology>Multi-pass membrane protein</topology>
    </subcellularLocation>
</comment>
<comment type="similarity">
    <text evidence="3">Belongs to the complex I subunit 5 family.</text>
</comment>
<feature type="chain" id="PRO_0000118211" description="NADH-quinone oxidoreductase chain 12">
    <location>
        <begin position="1"/>
        <end position="703"/>
    </location>
</feature>
<feature type="transmembrane region" description="Helical" evidence="1">
    <location>
        <begin position="4"/>
        <end position="24"/>
    </location>
</feature>
<feature type="transmembrane region" description="Helical" evidence="1">
    <location>
        <begin position="30"/>
        <end position="50"/>
    </location>
</feature>
<feature type="transmembrane region" description="Helical" evidence="1">
    <location>
        <begin position="79"/>
        <end position="99"/>
    </location>
</feature>
<feature type="transmembrane region" description="Helical" evidence="1">
    <location>
        <begin position="116"/>
        <end position="136"/>
    </location>
</feature>
<feature type="transmembrane region" description="Helical" evidence="1">
    <location>
        <begin position="138"/>
        <end position="158"/>
    </location>
</feature>
<feature type="transmembrane region" description="Helical" evidence="1">
    <location>
        <begin position="179"/>
        <end position="199"/>
    </location>
</feature>
<feature type="transmembrane region" description="Helical" evidence="1">
    <location>
        <begin position="224"/>
        <end position="244"/>
    </location>
</feature>
<feature type="transmembrane region" description="Helical" evidence="1">
    <location>
        <begin position="256"/>
        <end position="276"/>
    </location>
</feature>
<feature type="transmembrane region" description="Helical" evidence="1">
    <location>
        <begin position="290"/>
        <end position="310"/>
    </location>
</feature>
<feature type="transmembrane region" description="Helical" evidence="1">
    <location>
        <begin position="325"/>
        <end position="345"/>
    </location>
</feature>
<feature type="transmembrane region" description="Helical" evidence="1">
    <location>
        <begin position="346"/>
        <end position="366"/>
    </location>
</feature>
<feature type="transmembrane region" description="Helical" evidence="1">
    <location>
        <begin position="381"/>
        <end position="401"/>
    </location>
</feature>
<feature type="transmembrane region" description="Helical" evidence="1">
    <location>
        <begin position="415"/>
        <end position="435"/>
    </location>
</feature>
<feature type="transmembrane region" description="Helical" evidence="1">
    <location>
        <begin position="475"/>
        <end position="495"/>
    </location>
</feature>
<feature type="transmembrane region" description="Helical" evidence="1">
    <location>
        <begin position="580"/>
        <end position="600"/>
    </location>
</feature>
<feature type="transmembrane region" description="Helical" evidence="1">
    <location>
        <begin position="679"/>
        <end position="699"/>
    </location>
</feature>
<gene>
    <name evidence="2" type="primary">nqo12</name>
</gene>
<organism>
    <name type="scientific">Paracoccus denitrificans</name>
    <dbReference type="NCBI Taxonomy" id="266"/>
    <lineage>
        <taxon>Bacteria</taxon>
        <taxon>Pseudomonadati</taxon>
        <taxon>Pseudomonadota</taxon>
        <taxon>Alphaproteobacteria</taxon>
        <taxon>Rhodobacterales</taxon>
        <taxon>Paracoccaceae</taxon>
        <taxon>Paracoccus</taxon>
    </lineage>
</organism>